<keyword id="KW-0413">Isomerase</keyword>
<keyword id="KW-0819">tRNA processing</keyword>
<evidence type="ECO:0000255" key="1">
    <source>
        <dbReference type="HAMAP-Rule" id="MF_00171"/>
    </source>
</evidence>
<accession>A3MU09</accession>
<organism>
    <name type="scientific">Pyrobaculum calidifontis (strain DSM 21063 / JCM 11548 / VA1)</name>
    <dbReference type="NCBI Taxonomy" id="410359"/>
    <lineage>
        <taxon>Archaea</taxon>
        <taxon>Thermoproteota</taxon>
        <taxon>Thermoprotei</taxon>
        <taxon>Thermoproteales</taxon>
        <taxon>Thermoproteaceae</taxon>
        <taxon>Pyrobaculum</taxon>
    </lineage>
</organism>
<comment type="function">
    <text evidence="1">Formation of pseudouridine at positions 38, 39 and 40 in the anticodon stem and loop of transfer RNAs.</text>
</comment>
<comment type="catalytic activity">
    <reaction evidence="1">
        <text>uridine(38/39/40) in tRNA = pseudouridine(38/39/40) in tRNA</text>
        <dbReference type="Rhea" id="RHEA:22376"/>
        <dbReference type="Rhea" id="RHEA-COMP:10085"/>
        <dbReference type="Rhea" id="RHEA-COMP:10087"/>
        <dbReference type="ChEBI" id="CHEBI:65314"/>
        <dbReference type="ChEBI" id="CHEBI:65315"/>
        <dbReference type="EC" id="5.4.99.12"/>
    </reaction>
</comment>
<comment type="similarity">
    <text evidence="1">Belongs to the tRNA pseudouridine synthase TruA family.</text>
</comment>
<protein>
    <recommendedName>
        <fullName evidence="1">tRNA pseudouridine synthase A</fullName>
        <ecNumber evidence="1">5.4.99.12</ecNumber>
    </recommendedName>
    <alternativeName>
        <fullName evidence="1">tRNA pseudouridine(38-40) synthase</fullName>
    </alternativeName>
    <alternativeName>
        <fullName evidence="1">tRNA pseudouridylate synthase I</fullName>
    </alternativeName>
    <alternativeName>
        <fullName evidence="1">tRNA-uridine isomerase I</fullName>
    </alternativeName>
</protein>
<dbReference type="EC" id="5.4.99.12" evidence="1"/>
<dbReference type="EMBL" id="CP000561">
    <property type="protein sequence ID" value="ABO08126.1"/>
    <property type="molecule type" value="Genomic_DNA"/>
</dbReference>
<dbReference type="RefSeq" id="WP_011849384.1">
    <property type="nucleotide sequence ID" value="NC_009073.1"/>
</dbReference>
<dbReference type="SMR" id="A3MU09"/>
<dbReference type="STRING" id="410359.Pcal_0700"/>
<dbReference type="GeneID" id="4909502"/>
<dbReference type="KEGG" id="pcl:Pcal_0700"/>
<dbReference type="eggNOG" id="arCOG04449">
    <property type="taxonomic scope" value="Archaea"/>
</dbReference>
<dbReference type="HOGENOM" id="CLU_014673_4_2_2"/>
<dbReference type="OrthoDB" id="25720at2157"/>
<dbReference type="Proteomes" id="UP000001431">
    <property type="component" value="Chromosome"/>
</dbReference>
<dbReference type="GO" id="GO:0003723">
    <property type="term" value="F:RNA binding"/>
    <property type="evidence" value="ECO:0007669"/>
    <property type="project" value="InterPro"/>
</dbReference>
<dbReference type="GO" id="GO:0160147">
    <property type="term" value="F:tRNA pseudouridine(38-40) synthase activity"/>
    <property type="evidence" value="ECO:0007669"/>
    <property type="project" value="UniProtKB-EC"/>
</dbReference>
<dbReference type="GO" id="GO:0031119">
    <property type="term" value="P:tRNA pseudouridine synthesis"/>
    <property type="evidence" value="ECO:0007669"/>
    <property type="project" value="UniProtKB-UniRule"/>
</dbReference>
<dbReference type="Gene3D" id="3.30.70.660">
    <property type="entry name" value="Pseudouridine synthase I, catalytic domain, C-terminal subdomain"/>
    <property type="match status" value="1"/>
</dbReference>
<dbReference type="Gene3D" id="3.30.70.580">
    <property type="entry name" value="Pseudouridine synthase I, catalytic domain, N-terminal subdomain"/>
    <property type="match status" value="1"/>
</dbReference>
<dbReference type="HAMAP" id="MF_00171">
    <property type="entry name" value="TruA"/>
    <property type="match status" value="1"/>
</dbReference>
<dbReference type="InterPro" id="IPR020103">
    <property type="entry name" value="PsdUridine_synth_cat_dom_sf"/>
</dbReference>
<dbReference type="InterPro" id="IPR001406">
    <property type="entry name" value="PsdUridine_synth_TruA"/>
</dbReference>
<dbReference type="InterPro" id="IPR020097">
    <property type="entry name" value="PsdUridine_synth_TruA_a/b_dom"/>
</dbReference>
<dbReference type="InterPro" id="IPR020095">
    <property type="entry name" value="PsdUridine_synth_TruA_C"/>
</dbReference>
<dbReference type="InterPro" id="IPR020094">
    <property type="entry name" value="TruA/RsuA/RluB/E/F_N"/>
</dbReference>
<dbReference type="PANTHER" id="PTHR11142">
    <property type="entry name" value="PSEUDOURIDYLATE SYNTHASE"/>
    <property type="match status" value="1"/>
</dbReference>
<dbReference type="PANTHER" id="PTHR11142:SF0">
    <property type="entry name" value="TRNA PSEUDOURIDINE SYNTHASE-LIKE 1"/>
    <property type="match status" value="1"/>
</dbReference>
<dbReference type="Pfam" id="PF01416">
    <property type="entry name" value="PseudoU_synth_1"/>
    <property type="match status" value="1"/>
</dbReference>
<dbReference type="PIRSF" id="PIRSF001430">
    <property type="entry name" value="tRNA_psdUrid_synth"/>
    <property type="match status" value="1"/>
</dbReference>
<dbReference type="SUPFAM" id="SSF55120">
    <property type="entry name" value="Pseudouridine synthase"/>
    <property type="match status" value="1"/>
</dbReference>
<proteinExistence type="inferred from homology"/>
<sequence length="257" mass="29001">MPYLYRVAYDGALFHGFTGHSNSVEAALRRVFGHLLGRGSRTDPGVSAVGNAVLAPSRLPLGYINSRLPRGVWTWAVAEVGEGFNPRRARRRRYLYVAPHWGEDVEAMREVAELFKGTHDFSSFIQFRGERGTPPVTTVDEVGVEVAGRLVYLYFVGKGFRNKQIRKMAWAILAAGRGVVSRRYVEELLERPRPGAVPSAPAEGLILLDIEYDVKFDVDRGELRKAYVYFLEKYRRLEALAAAYRAAGERLLFYDDL</sequence>
<gene>
    <name evidence="1" type="primary">truA</name>
    <name type="ordered locus">Pcal_0700</name>
</gene>
<feature type="chain" id="PRO_1000017145" description="tRNA pseudouridine synthase A">
    <location>
        <begin position="1"/>
        <end position="257"/>
    </location>
</feature>
<feature type="active site" description="Nucleophile" evidence="1">
    <location>
        <position position="43"/>
    </location>
</feature>
<feature type="binding site" evidence="1">
    <location>
        <position position="94"/>
    </location>
    <ligand>
        <name>substrate</name>
    </ligand>
</feature>
<reference key="1">
    <citation type="submission" date="2007-02" db="EMBL/GenBank/DDBJ databases">
        <title>Complete sequence of Pyrobaculum calidifontis JCM 11548.</title>
        <authorList>
            <consortium name="US DOE Joint Genome Institute"/>
            <person name="Copeland A."/>
            <person name="Lucas S."/>
            <person name="Lapidus A."/>
            <person name="Barry K."/>
            <person name="Glavina del Rio T."/>
            <person name="Dalin E."/>
            <person name="Tice H."/>
            <person name="Pitluck S."/>
            <person name="Chain P."/>
            <person name="Malfatti S."/>
            <person name="Shin M."/>
            <person name="Vergez L."/>
            <person name="Schmutz J."/>
            <person name="Larimer F."/>
            <person name="Land M."/>
            <person name="Hauser L."/>
            <person name="Kyrpides N."/>
            <person name="Mikhailova N."/>
            <person name="Cozen A.E."/>
            <person name="Fitz-Gibbon S.T."/>
            <person name="House C.H."/>
            <person name="Saltikov C."/>
            <person name="Lowe T.M."/>
            <person name="Richardson P."/>
        </authorList>
    </citation>
    <scope>NUCLEOTIDE SEQUENCE [LARGE SCALE GENOMIC DNA]</scope>
    <source>
        <strain>DSM 21063 / JCM 11548 / VA1</strain>
    </source>
</reference>
<name>TRUA_PYRCJ</name>